<feature type="chain" id="PRO_0000440870" description="Protein SAMBA">
    <location>
        <begin position="1"/>
        <end position="100"/>
    </location>
</feature>
<feature type="region of interest" description="Disordered" evidence="1">
    <location>
        <begin position="1"/>
        <end position="40"/>
    </location>
</feature>
<name>SAMBA_ARATH</name>
<proteinExistence type="evidence at protein level"/>
<keyword id="KW-0341">Growth regulation</keyword>
<keyword id="KW-1185">Reference proteome</keyword>
<accession>Q9C613</accession>
<evidence type="ECO:0000256" key="1">
    <source>
        <dbReference type="SAM" id="MobiDB-lite"/>
    </source>
</evidence>
<evidence type="ECO:0000269" key="2">
    <source>
    </source>
</evidence>
<evidence type="ECO:0000303" key="3">
    <source>
    </source>
</evidence>
<evidence type="ECO:0000312" key="4">
    <source>
        <dbReference type="Araport" id="AT1G32310"/>
    </source>
</evidence>
<evidence type="ECO:0000312" key="5">
    <source>
        <dbReference type="EMBL" id="AEE31462.1"/>
    </source>
</evidence>
<gene>
    <name evidence="3" type="primary">SAMBA</name>
    <name evidence="4" type="ordered locus">At1g32310</name>
    <name evidence="5" type="ORF">F27G20.14</name>
</gene>
<sequence length="100" mass="10856">MNGASPAHSLVSTTAVAGGGGSSGAAAGLDDFHFPPDIPSMQERKDEAMRVLKADLMTELDKEVKSLEEDSWMFEGPRSRIHLISRRGNFLKKGGEVKLW</sequence>
<protein>
    <recommendedName>
        <fullName evidence="3">Protein SAMBA</fullName>
    </recommendedName>
</protein>
<dbReference type="EMBL" id="AC084110">
    <property type="protein sequence ID" value="AAG60169.1"/>
    <property type="molecule type" value="Genomic_DNA"/>
</dbReference>
<dbReference type="EMBL" id="CP002684">
    <property type="protein sequence ID" value="AEE31462.1"/>
    <property type="molecule type" value="Genomic_DNA"/>
</dbReference>
<dbReference type="EMBL" id="BT004179">
    <property type="protein sequence ID" value="AAO42198.1"/>
    <property type="molecule type" value="mRNA"/>
</dbReference>
<dbReference type="EMBL" id="BT005704">
    <property type="protein sequence ID" value="AAO64124.1"/>
    <property type="molecule type" value="mRNA"/>
</dbReference>
<dbReference type="EMBL" id="AY086534">
    <property type="protein sequence ID" value="AAM63599.1"/>
    <property type="molecule type" value="mRNA"/>
</dbReference>
<dbReference type="RefSeq" id="NP_564394.1">
    <property type="nucleotide sequence ID" value="NM_102964.5"/>
</dbReference>
<dbReference type="SMR" id="Q9C613"/>
<dbReference type="FunCoup" id="Q9C613">
    <property type="interactions" value="1207"/>
</dbReference>
<dbReference type="IntAct" id="Q9C613">
    <property type="interactions" value="18"/>
</dbReference>
<dbReference type="STRING" id="3702.Q9C613"/>
<dbReference type="PaxDb" id="3702-AT1G32310.1"/>
<dbReference type="ProteomicsDB" id="232928"/>
<dbReference type="EnsemblPlants" id="AT1G32310.1">
    <property type="protein sequence ID" value="AT1G32310.1"/>
    <property type="gene ID" value="AT1G32310"/>
</dbReference>
<dbReference type="GeneID" id="840123"/>
<dbReference type="Gramene" id="AT1G32310.1">
    <property type="protein sequence ID" value="AT1G32310.1"/>
    <property type="gene ID" value="AT1G32310"/>
</dbReference>
<dbReference type="KEGG" id="ath:AT1G32310"/>
<dbReference type="Araport" id="AT1G32310"/>
<dbReference type="TAIR" id="AT1G32310">
    <property type="gene designation" value="SAMBA"/>
</dbReference>
<dbReference type="eggNOG" id="ENOG502S622">
    <property type="taxonomic scope" value="Eukaryota"/>
</dbReference>
<dbReference type="HOGENOM" id="CLU_159573_1_0_1"/>
<dbReference type="InParanoid" id="Q9C613"/>
<dbReference type="OMA" id="WMFEGPR"/>
<dbReference type="OrthoDB" id="1935166at2759"/>
<dbReference type="PRO" id="PR:Q9C613"/>
<dbReference type="Proteomes" id="UP000006548">
    <property type="component" value="Chromosome 1"/>
</dbReference>
<dbReference type="ExpressionAtlas" id="Q9C613">
    <property type="expression patterns" value="baseline and differential"/>
</dbReference>
<dbReference type="GO" id="GO:0010997">
    <property type="term" value="F:anaphase-promoting complex binding"/>
    <property type="evidence" value="ECO:0000314"/>
    <property type="project" value="TAIR"/>
</dbReference>
<dbReference type="GO" id="GO:0009556">
    <property type="term" value="P:microsporogenesis"/>
    <property type="evidence" value="ECO:0000315"/>
    <property type="project" value="TAIR"/>
</dbReference>
<dbReference type="GO" id="GO:0046621">
    <property type="term" value="P:negative regulation of organ growth"/>
    <property type="evidence" value="ECO:0000315"/>
    <property type="project" value="TAIR"/>
</dbReference>
<dbReference type="GO" id="GO:0009555">
    <property type="term" value="P:pollen development"/>
    <property type="evidence" value="ECO:0000315"/>
    <property type="project" value="TAIR"/>
</dbReference>
<dbReference type="GO" id="GO:0045732">
    <property type="term" value="P:positive regulation of protein catabolic process"/>
    <property type="evidence" value="ECO:0000315"/>
    <property type="project" value="TAIR"/>
</dbReference>
<dbReference type="InterPro" id="IPR037547">
    <property type="entry name" value="SAMBA"/>
</dbReference>
<dbReference type="PANTHER" id="PTHR37387">
    <property type="entry name" value="PROTEIN SAMBA"/>
    <property type="match status" value="1"/>
</dbReference>
<dbReference type="PANTHER" id="PTHR37387:SF1">
    <property type="entry name" value="PROTEIN SAMBA"/>
    <property type="match status" value="1"/>
</dbReference>
<reference key="1">
    <citation type="journal article" date="2000" name="Nature">
        <title>Sequence and analysis of chromosome 1 of the plant Arabidopsis thaliana.</title>
        <authorList>
            <person name="Theologis A."/>
            <person name="Ecker J.R."/>
            <person name="Palm C.J."/>
            <person name="Federspiel N.A."/>
            <person name="Kaul S."/>
            <person name="White O."/>
            <person name="Alonso J."/>
            <person name="Altafi H."/>
            <person name="Araujo R."/>
            <person name="Bowman C.L."/>
            <person name="Brooks S.Y."/>
            <person name="Buehler E."/>
            <person name="Chan A."/>
            <person name="Chao Q."/>
            <person name="Chen H."/>
            <person name="Cheuk R.F."/>
            <person name="Chin C.W."/>
            <person name="Chung M.K."/>
            <person name="Conn L."/>
            <person name="Conway A.B."/>
            <person name="Conway A.R."/>
            <person name="Creasy T.H."/>
            <person name="Dewar K."/>
            <person name="Dunn P."/>
            <person name="Etgu P."/>
            <person name="Feldblyum T.V."/>
            <person name="Feng J.-D."/>
            <person name="Fong B."/>
            <person name="Fujii C.Y."/>
            <person name="Gill J.E."/>
            <person name="Goldsmith A.D."/>
            <person name="Haas B."/>
            <person name="Hansen N.F."/>
            <person name="Hughes B."/>
            <person name="Huizar L."/>
            <person name="Hunter J.L."/>
            <person name="Jenkins J."/>
            <person name="Johnson-Hopson C."/>
            <person name="Khan S."/>
            <person name="Khaykin E."/>
            <person name="Kim C.J."/>
            <person name="Koo H.L."/>
            <person name="Kremenetskaia I."/>
            <person name="Kurtz D.B."/>
            <person name="Kwan A."/>
            <person name="Lam B."/>
            <person name="Langin-Hooper S."/>
            <person name="Lee A."/>
            <person name="Lee J.M."/>
            <person name="Lenz C.A."/>
            <person name="Li J.H."/>
            <person name="Li Y.-P."/>
            <person name="Lin X."/>
            <person name="Liu S.X."/>
            <person name="Liu Z.A."/>
            <person name="Luros J.S."/>
            <person name="Maiti R."/>
            <person name="Marziali A."/>
            <person name="Militscher J."/>
            <person name="Miranda M."/>
            <person name="Nguyen M."/>
            <person name="Nierman W.C."/>
            <person name="Osborne B.I."/>
            <person name="Pai G."/>
            <person name="Peterson J."/>
            <person name="Pham P.K."/>
            <person name="Rizzo M."/>
            <person name="Rooney T."/>
            <person name="Rowley D."/>
            <person name="Sakano H."/>
            <person name="Salzberg S.L."/>
            <person name="Schwartz J.R."/>
            <person name="Shinn P."/>
            <person name="Southwick A.M."/>
            <person name="Sun H."/>
            <person name="Tallon L.J."/>
            <person name="Tambunga G."/>
            <person name="Toriumi M.J."/>
            <person name="Town C.D."/>
            <person name="Utterback T."/>
            <person name="Van Aken S."/>
            <person name="Vaysberg M."/>
            <person name="Vysotskaia V.S."/>
            <person name="Walker M."/>
            <person name="Wu D."/>
            <person name="Yu G."/>
            <person name="Fraser C.M."/>
            <person name="Venter J.C."/>
            <person name="Davis R.W."/>
        </authorList>
    </citation>
    <scope>NUCLEOTIDE SEQUENCE [LARGE SCALE GENOMIC DNA]</scope>
    <source>
        <strain>cv. Columbia</strain>
    </source>
</reference>
<reference key="2">
    <citation type="journal article" date="2017" name="Plant J.">
        <title>Araport11: a complete reannotation of the Arabidopsis thaliana reference genome.</title>
        <authorList>
            <person name="Cheng C.Y."/>
            <person name="Krishnakumar V."/>
            <person name="Chan A.P."/>
            <person name="Thibaud-Nissen F."/>
            <person name="Schobel S."/>
            <person name="Town C.D."/>
        </authorList>
    </citation>
    <scope>GENOME REANNOTATION</scope>
    <source>
        <strain>cv. Columbia</strain>
    </source>
</reference>
<reference key="3">
    <citation type="journal article" date="2003" name="Science">
        <title>Empirical analysis of transcriptional activity in the Arabidopsis genome.</title>
        <authorList>
            <person name="Yamada K."/>
            <person name="Lim J."/>
            <person name="Dale J.M."/>
            <person name="Chen H."/>
            <person name="Shinn P."/>
            <person name="Palm C.J."/>
            <person name="Southwick A.M."/>
            <person name="Wu H.C."/>
            <person name="Kim C.J."/>
            <person name="Nguyen M."/>
            <person name="Pham P.K."/>
            <person name="Cheuk R.F."/>
            <person name="Karlin-Newmann G."/>
            <person name="Liu S.X."/>
            <person name="Lam B."/>
            <person name="Sakano H."/>
            <person name="Wu T."/>
            <person name="Yu G."/>
            <person name="Miranda M."/>
            <person name="Quach H.L."/>
            <person name="Tripp M."/>
            <person name="Chang C.H."/>
            <person name="Lee J.M."/>
            <person name="Toriumi M.J."/>
            <person name="Chan M.M."/>
            <person name="Tang C.C."/>
            <person name="Onodera C.S."/>
            <person name="Deng J.M."/>
            <person name="Akiyama K."/>
            <person name="Ansari Y."/>
            <person name="Arakawa T."/>
            <person name="Banh J."/>
            <person name="Banno F."/>
            <person name="Bowser L."/>
            <person name="Brooks S.Y."/>
            <person name="Carninci P."/>
            <person name="Chao Q."/>
            <person name="Choy N."/>
            <person name="Enju A."/>
            <person name="Goldsmith A.D."/>
            <person name="Gurjal M."/>
            <person name="Hansen N.F."/>
            <person name="Hayashizaki Y."/>
            <person name="Johnson-Hopson C."/>
            <person name="Hsuan V.W."/>
            <person name="Iida K."/>
            <person name="Karnes M."/>
            <person name="Khan S."/>
            <person name="Koesema E."/>
            <person name="Ishida J."/>
            <person name="Jiang P.X."/>
            <person name="Jones T."/>
            <person name="Kawai J."/>
            <person name="Kamiya A."/>
            <person name="Meyers C."/>
            <person name="Nakajima M."/>
            <person name="Narusaka M."/>
            <person name="Seki M."/>
            <person name="Sakurai T."/>
            <person name="Satou M."/>
            <person name="Tamse R."/>
            <person name="Vaysberg M."/>
            <person name="Wallender E.K."/>
            <person name="Wong C."/>
            <person name="Yamamura Y."/>
            <person name="Yuan S."/>
            <person name="Shinozaki K."/>
            <person name="Davis R.W."/>
            <person name="Theologis A."/>
            <person name="Ecker J.R."/>
        </authorList>
    </citation>
    <scope>NUCLEOTIDE SEQUENCE [LARGE SCALE MRNA]</scope>
    <source>
        <strain>cv. Columbia</strain>
    </source>
</reference>
<reference key="4">
    <citation type="submission" date="2002-03" db="EMBL/GenBank/DDBJ databases">
        <title>Full-length cDNA from Arabidopsis thaliana.</title>
        <authorList>
            <person name="Brover V.V."/>
            <person name="Troukhan M.E."/>
            <person name="Alexandrov N.A."/>
            <person name="Lu Y.-P."/>
            <person name="Flavell R.B."/>
            <person name="Feldmann K.A."/>
        </authorList>
    </citation>
    <scope>NUCLEOTIDE SEQUENCE [LARGE SCALE MRNA]</scope>
</reference>
<reference key="5">
    <citation type="journal article" date="2012" name="Proc. Natl. Acad. Sci. U.S.A.">
        <title>SAMBA, a plant-specific anaphase-promoting complex/cyclosome regulator is involved in early development and A-type cyclin stabilization.</title>
        <authorList>
            <person name="Eloy N.B."/>
            <person name="Gonzalez N."/>
            <person name="Van Leene J."/>
            <person name="Maleux K."/>
            <person name="Vanhaeren H."/>
            <person name="De Milde L."/>
            <person name="Dhondt S."/>
            <person name="Vercruysse L."/>
            <person name="Witters E."/>
            <person name="Mercier R."/>
            <person name="Cromer L."/>
            <person name="Beemster G.T."/>
            <person name="Remaut H."/>
            <person name="Van Montagu M.C."/>
            <person name="De Jaeger G."/>
            <person name="Ferreira P.C."/>
            <person name="Inze D."/>
        </authorList>
    </citation>
    <scope>FUNCTION</scope>
    <scope>IDENTIFICATION BY MASS SPECTROMETRY</scope>
    <scope>INTERACTION WITH CDC27B AND CYCA2-3</scope>
    <scope>TISSUE SPECIFICITY</scope>
    <scope>DISRUPTION PHENOTYPE</scope>
</reference>
<comment type="function">
    <text evidence="2">Plays an important role in organ size control. Acts as negative regulator of the anaphase-promoting complex/cyclosome (APC/C). Regulates cell proliferation during early development by targeting CYCA2-3 for APC/C-mediated degradation. Required for mitosis I during pollen microspore development.</text>
</comment>
<comment type="subunit">
    <text evidence="2">Interacts with CDC27B and CYCA2-3.</text>
</comment>
<comment type="tissue specificity">
    <text evidence="2">Expressed in embryos, germinating seeds, hypocotyls and pollen grains.</text>
</comment>
<comment type="disruption phenotype">
    <text evidence="2">Growth-related phenotypes, such as formation of large roots, leaves and seeds, enlarged meristem size, and reduced fertility due to defect in male gametogenesis.</text>
</comment>
<organism>
    <name type="scientific">Arabidopsis thaliana</name>
    <name type="common">Mouse-ear cress</name>
    <dbReference type="NCBI Taxonomy" id="3702"/>
    <lineage>
        <taxon>Eukaryota</taxon>
        <taxon>Viridiplantae</taxon>
        <taxon>Streptophyta</taxon>
        <taxon>Embryophyta</taxon>
        <taxon>Tracheophyta</taxon>
        <taxon>Spermatophyta</taxon>
        <taxon>Magnoliopsida</taxon>
        <taxon>eudicotyledons</taxon>
        <taxon>Gunneridae</taxon>
        <taxon>Pentapetalae</taxon>
        <taxon>rosids</taxon>
        <taxon>malvids</taxon>
        <taxon>Brassicales</taxon>
        <taxon>Brassicaceae</taxon>
        <taxon>Camelineae</taxon>
        <taxon>Arabidopsis</taxon>
    </lineage>
</organism>